<keyword id="KW-0025">Alternative splicing</keyword>
<keyword id="KW-0175">Coiled coil</keyword>
<keyword id="KW-1017">Isopeptide bond</keyword>
<keyword id="KW-0507">mRNA processing</keyword>
<keyword id="KW-0508">mRNA splicing</keyword>
<keyword id="KW-0539">Nucleus</keyword>
<keyword id="KW-0597">Phosphoprotein</keyword>
<keyword id="KW-1185">Reference proteome</keyword>
<keyword id="KW-0747">Spliceosome</keyword>
<keyword id="KW-0832">Ubl conjugation</keyword>
<reference key="1">
    <citation type="journal article" date="2005" name="Science">
        <title>The transcriptional landscape of the mammalian genome.</title>
        <authorList>
            <person name="Carninci P."/>
            <person name="Kasukawa T."/>
            <person name="Katayama S."/>
            <person name="Gough J."/>
            <person name="Frith M.C."/>
            <person name="Maeda N."/>
            <person name="Oyama R."/>
            <person name="Ravasi T."/>
            <person name="Lenhard B."/>
            <person name="Wells C."/>
            <person name="Kodzius R."/>
            <person name="Shimokawa K."/>
            <person name="Bajic V.B."/>
            <person name="Brenner S.E."/>
            <person name="Batalov S."/>
            <person name="Forrest A.R."/>
            <person name="Zavolan M."/>
            <person name="Davis M.J."/>
            <person name="Wilming L.G."/>
            <person name="Aidinis V."/>
            <person name="Allen J.E."/>
            <person name="Ambesi-Impiombato A."/>
            <person name="Apweiler R."/>
            <person name="Aturaliya R.N."/>
            <person name="Bailey T.L."/>
            <person name="Bansal M."/>
            <person name="Baxter L."/>
            <person name="Beisel K.W."/>
            <person name="Bersano T."/>
            <person name="Bono H."/>
            <person name="Chalk A.M."/>
            <person name="Chiu K.P."/>
            <person name="Choudhary V."/>
            <person name="Christoffels A."/>
            <person name="Clutterbuck D.R."/>
            <person name="Crowe M.L."/>
            <person name="Dalla E."/>
            <person name="Dalrymple B.P."/>
            <person name="de Bono B."/>
            <person name="Della Gatta G."/>
            <person name="di Bernardo D."/>
            <person name="Down T."/>
            <person name="Engstrom P."/>
            <person name="Fagiolini M."/>
            <person name="Faulkner G."/>
            <person name="Fletcher C.F."/>
            <person name="Fukushima T."/>
            <person name="Furuno M."/>
            <person name="Futaki S."/>
            <person name="Gariboldi M."/>
            <person name="Georgii-Hemming P."/>
            <person name="Gingeras T.R."/>
            <person name="Gojobori T."/>
            <person name="Green R.E."/>
            <person name="Gustincich S."/>
            <person name="Harbers M."/>
            <person name="Hayashi Y."/>
            <person name="Hensch T.K."/>
            <person name="Hirokawa N."/>
            <person name="Hill D."/>
            <person name="Huminiecki L."/>
            <person name="Iacono M."/>
            <person name="Ikeo K."/>
            <person name="Iwama A."/>
            <person name="Ishikawa T."/>
            <person name="Jakt M."/>
            <person name="Kanapin A."/>
            <person name="Katoh M."/>
            <person name="Kawasawa Y."/>
            <person name="Kelso J."/>
            <person name="Kitamura H."/>
            <person name="Kitano H."/>
            <person name="Kollias G."/>
            <person name="Krishnan S.P."/>
            <person name="Kruger A."/>
            <person name="Kummerfeld S.K."/>
            <person name="Kurochkin I.V."/>
            <person name="Lareau L.F."/>
            <person name="Lazarevic D."/>
            <person name="Lipovich L."/>
            <person name="Liu J."/>
            <person name="Liuni S."/>
            <person name="McWilliam S."/>
            <person name="Madan Babu M."/>
            <person name="Madera M."/>
            <person name="Marchionni L."/>
            <person name="Matsuda H."/>
            <person name="Matsuzawa S."/>
            <person name="Miki H."/>
            <person name="Mignone F."/>
            <person name="Miyake S."/>
            <person name="Morris K."/>
            <person name="Mottagui-Tabar S."/>
            <person name="Mulder N."/>
            <person name="Nakano N."/>
            <person name="Nakauchi H."/>
            <person name="Ng P."/>
            <person name="Nilsson R."/>
            <person name="Nishiguchi S."/>
            <person name="Nishikawa S."/>
            <person name="Nori F."/>
            <person name="Ohara O."/>
            <person name="Okazaki Y."/>
            <person name="Orlando V."/>
            <person name="Pang K.C."/>
            <person name="Pavan W.J."/>
            <person name="Pavesi G."/>
            <person name="Pesole G."/>
            <person name="Petrovsky N."/>
            <person name="Piazza S."/>
            <person name="Reed J."/>
            <person name="Reid J.F."/>
            <person name="Ring B.Z."/>
            <person name="Ringwald M."/>
            <person name="Rost B."/>
            <person name="Ruan Y."/>
            <person name="Salzberg S.L."/>
            <person name="Sandelin A."/>
            <person name="Schneider C."/>
            <person name="Schoenbach C."/>
            <person name="Sekiguchi K."/>
            <person name="Semple C.A."/>
            <person name="Seno S."/>
            <person name="Sessa L."/>
            <person name="Sheng Y."/>
            <person name="Shibata Y."/>
            <person name="Shimada H."/>
            <person name="Shimada K."/>
            <person name="Silva D."/>
            <person name="Sinclair B."/>
            <person name="Sperling S."/>
            <person name="Stupka E."/>
            <person name="Sugiura K."/>
            <person name="Sultana R."/>
            <person name="Takenaka Y."/>
            <person name="Taki K."/>
            <person name="Tammoja K."/>
            <person name="Tan S.L."/>
            <person name="Tang S."/>
            <person name="Taylor M.S."/>
            <person name="Tegner J."/>
            <person name="Teichmann S.A."/>
            <person name="Ueda H.R."/>
            <person name="van Nimwegen E."/>
            <person name="Verardo R."/>
            <person name="Wei C.L."/>
            <person name="Yagi K."/>
            <person name="Yamanishi H."/>
            <person name="Zabarovsky E."/>
            <person name="Zhu S."/>
            <person name="Zimmer A."/>
            <person name="Hide W."/>
            <person name="Bult C."/>
            <person name="Grimmond S.M."/>
            <person name="Teasdale R.D."/>
            <person name="Liu E.T."/>
            <person name="Brusic V."/>
            <person name="Quackenbush J."/>
            <person name="Wahlestedt C."/>
            <person name="Mattick J.S."/>
            <person name="Hume D.A."/>
            <person name="Kai C."/>
            <person name="Sasaki D."/>
            <person name="Tomaru Y."/>
            <person name="Fukuda S."/>
            <person name="Kanamori-Katayama M."/>
            <person name="Suzuki M."/>
            <person name="Aoki J."/>
            <person name="Arakawa T."/>
            <person name="Iida J."/>
            <person name="Imamura K."/>
            <person name="Itoh M."/>
            <person name="Kato T."/>
            <person name="Kawaji H."/>
            <person name="Kawagashira N."/>
            <person name="Kawashima T."/>
            <person name="Kojima M."/>
            <person name="Kondo S."/>
            <person name="Konno H."/>
            <person name="Nakano K."/>
            <person name="Ninomiya N."/>
            <person name="Nishio T."/>
            <person name="Okada M."/>
            <person name="Plessy C."/>
            <person name="Shibata K."/>
            <person name="Shiraki T."/>
            <person name="Suzuki S."/>
            <person name="Tagami M."/>
            <person name="Waki K."/>
            <person name="Watahiki A."/>
            <person name="Okamura-Oho Y."/>
            <person name="Suzuki H."/>
            <person name="Kawai J."/>
            <person name="Hayashizaki Y."/>
        </authorList>
    </citation>
    <scope>NUCLEOTIDE SEQUENCE [LARGE SCALE MRNA] (ISOFORMS 1 AND 2)</scope>
    <source>
        <strain>C57BL/6J</strain>
        <tissue>Thymus</tissue>
        <tissue>Vagina</tissue>
    </source>
</reference>
<reference key="2">
    <citation type="journal article" date="2004" name="Genome Res.">
        <title>The status, quality, and expansion of the NIH full-length cDNA project: the Mammalian Gene Collection (MGC).</title>
        <authorList>
            <consortium name="The MGC Project Team"/>
        </authorList>
    </citation>
    <scope>NUCLEOTIDE SEQUENCE [LARGE SCALE MRNA] (ISOFORM 1)</scope>
    <source>
        <strain>FVB/N</strain>
        <tissue>Mammary tumor</tissue>
    </source>
</reference>
<reference key="3">
    <citation type="journal article" date="2007" name="Proc. Natl. Acad. Sci. U.S.A.">
        <title>Large-scale phosphorylation analysis of mouse liver.</title>
        <authorList>
            <person name="Villen J."/>
            <person name="Beausoleil S.A."/>
            <person name="Gerber S.A."/>
            <person name="Gygi S.P."/>
        </authorList>
    </citation>
    <scope>PHOSPHORYLATION [LARGE SCALE ANALYSIS] AT THR-144; THR-170; THR-183; THR-196; THR-209 AND THR-222</scope>
    <scope>IDENTIFICATION BY MASS SPECTROMETRY [LARGE SCALE ANALYSIS]</scope>
    <source>
        <tissue>Liver</tissue>
    </source>
</reference>
<reference key="4">
    <citation type="journal article" date="2010" name="Cell">
        <title>A tissue-specific atlas of mouse protein phosphorylation and expression.</title>
        <authorList>
            <person name="Huttlin E.L."/>
            <person name="Jedrychowski M.P."/>
            <person name="Elias J.E."/>
            <person name="Goswami T."/>
            <person name="Rad R."/>
            <person name="Beausoleil S.A."/>
            <person name="Villen J."/>
            <person name="Haas W."/>
            <person name="Sowa M.E."/>
            <person name="Gygi S.P."/>
        </authorList>
    </citation>
    <scope>PHOSPHORYLATION [LARGE SCALE ANALYSIS] AT THR-131; SER-148; SER-174; SER-187; THR-196; THR-209; SER-226; SER-297; SER-341; SER-344; SER-371 AND SER-376</scope>
    <scope>IDENTIFICATION BY MASS SPECTROMETRY [LARGE SCALE ANALYSIS]</scope>
    <source>
        <tissue>Kidney</tissue>
        <tissue>Lung</tissue>
        <tissue>Spleen</tissue>
        <tissue>Testis</tissue>
    </source>
</reference>
<sequence>MAAAPPLTKAEYLKRYLSGTDAGLEGGPEAGRKRRKKRPKPGGAGGKGMRIVDDDVGWAAISTAKPEKEEEEDGDLPVVAEFVDERPEEVKQMEAFRSSAKWKLLGGHGEDGHFHHDDQDSSPPRRVRHDTPDTSPPRKARHDTPDPSPPRKARHDTPDTSPPRKARHDTPDPSPPRKARHDTPDPSPPRRVRHDTPDLSPPRRVRHDTPDLSPPRRVRHDTPDPSPPRRVRHDLDASPPRKSHRNSSAVSPRRGHHGSLGTSSPRQTHNHSPTAAQHRRTLDSSGTQHLRRAHHESPDLELHKAKSSKAAERAPSKAASQSGLGPSHPSLSTNSKYEHDSDLSPPRKRQAKAHFEAKKQLDSKGVYQKASDSDLSPPRKKKNSGHQDSDSDLSPPRNRPRRQSSDSDLSPPRRRQRTKSSDSDLSPPRRSPRPGKKTAHMYSGAKTGLVTDVQREHQELKKQDQDTTDLGAQFEFTETVFRDKSGRKRNLKLERLEQRRKAEKDSERDELYAQWGKGLAQSRQQQQNVEDAMKEMQKPLARYIDDEDLDRMLREQEREGDPMANFIKKNKAKENKNKKVKPRYSGPAPPPNRFNIWPGYRWDGVDRSNGFEQKRFARLASKKAVEELAYKWSVEDM</sequence>
<gene>
    <name type="primary">Bud13</name>
</gene>
<accession>Q8R149</accession>
<accession>Q8BQC0</accession>
<accession>Q8CB03</accession>
<comment type="function">
    <text evidence="2">Involved in pre-mRNA splicing as component of the activated spliceosome. As a component of the minor spliceosome, involved in the splicing of U12-type introns in pre-mRNAs (By similarity).</text>
</comment>
<comment type="subunit">
    <text evidence="2">Part of the activated spliceosome B/catalytic step 1 spliceosome, one of the forms of the spliceosome which has a well-formed active site but still cannot catalyze the branching reaction and is composed of at least 52 proteins, the U2, U5 and U6 snRNAs and the pre-mRNA. Component of the minor spliceosome, which splices U12-type introns (By similarity).</text>
</comment>
<comment type="subcellular location">
    <subcellularLocation>
        <location evidence="2">Nucleus</location>
    </subcellularLocation>
</comment>
<comment type="alternative products">
    <event type="alternative splicing"/>
    <isoform>
        <id>Q8R149-1</id>
        <name>1</name>
        <sequence type="displayed"/>
    </isoform>
    <isoform>
        <id>Q8R149-2</id>
        <name>2</name>
        <sequence type="described" ref="VSP_025591"/>
    </isoform>
</comment>
<comment type="similarity">
    <text evidence="6">Belongs to the CWC26 family.</text>
</comment>
<organism>
    <name type="scientific">Mus musculus</name>
    <name type="common">Mouse</name>
    <dbReference type="NCBI Taxonomy" id="10090"/>
    <lineage>
        <taxon>Eukaryota</taxon>
        <taxon>Metazoa</taxon>
        <taxon>Chordata</taxon>
        <taxon>Craniata</taxon>
        <taxon>Vertebrata</taxon>
        <taxon>Euteleostomi</taxon>
        <taxon>Mammalia</taxon>
        <taxon>Eutheria</taxon>
        <taxon>Euarchontoglires</taxon>
        <taxon>Glires</taxon>
        <taxon>Rodentia</taxon>
        <taxon>Myomorpha</taxon>
        <taxon>Muroidea</taxon>
        <taxon>Muridae</taxon>
        <taxon>Murinae</taxon>
        <taxon>Mus</taxon>
        <taxon>Mus</taxon>
    </lineage>
</organism>
<protein>
    <recommendedName>
        <fullName>BUD13 homolog</fullName>
    </recommendedName>
</protein>
<evidence type="ECO:0000250" key="1">
    <source>
        <dbReference type="UniProtKB" id="Q4QQU1"/>
    </source>
</evidence>
<evidence type="ECO:0000250" key="2">
    <source>
        <dbReference type="UniProtKB" id="Q9BRD0"/>
    </source>
</evidence>
<evidence type="ECO:0000255" key="3"/>
<evidence type="ECO:0000256" key="4">
    <source>
        <dbReference type="SAM" id="MobiDB-lite"/>
    </source>
</evidence>
<evidence type="ECO:0000303" key="5">
    <source>
    </source>
</evidence>
<evidence type="ECO:0000305" key="6"/>
<evidence type="ECO:0007744" key="7">
    <source>
    </source>
</evidence>
<evidence type="ECO:0007744" key="8">
    <source>
    </source>
</evidence>
<dbReference type="EMBL" id="AK037134">
    <property type="protein sequence ID" value="BAC29716.1"/>
    <property type="molecule type" value="mRNA"/>
</dbReference>
<dbReference type="EMBL" id="AK038126">
    <property type="protein sequence ID" value="BAE20531.1"/>
    <property type="molecule type" value="mRNA"/>
</dbReference>
<dbReference type="EMBL" id="AK051047">
    <property type="protein sequence ID" value="BAC34509.1"/>
    <property type="molecule type" value="mRNA"/>
</dbReference>
<dbReference type="EMBL" id="BC025490">
    <property type="protein sequence ID" value="AAH25490.1"/>
    <property type="molecule type" value="mRNA"/>
</dbReference>
<dbReference type="CCDS" id="CCDS23145.1">
    <molecule id="Q8R149-1"/>
</dbReference>
<dbReference type="RefSeq" id="NP_666112.1">
    <molecule id="Q8R149-1"/>
    <property type="nucleotide sequence ID" value="NM_146000.2"/>
</dbReference>
<dbReference type="SMR" id="Q8R149"/>
<dbReference type="BioGRID" id="229592">
    <property type="interactions" value="11"/>
</dbReference>
<dbReference type="FunCoup" id="Q8R149">
    <property type="interactions" value="4244"/>
</dbReference>
<dbReference type="IntAct" id="Q8R149">
    <property type="interactions" value="11"/>
</dbReference>
<dbReference type="STRING" id="10090.ENSMUSP00000074490"/>
<dbReference type="iPTMnet" id="Q8R149"/>
<dbReference type="PhosphoSitePlus" id="Q8R149"/>
<dbReference type="jPOST" id="Q8R149"/>
<dbReference type="PaxDb" id="10090-ENSMUSP00000074490"/>
<dbReference type="PeptideAtlas" id="Q8R149"/>
<dbReference type="ProteomicsDB" id="265321">
    <molecule id="Q8R149-1"/>
</dbReference>
<dbReference type="ProteomicsDB" id="265322">
    <molecule id="Q8R149-2"/>
</dbReference>
<dbReference type="Pumba" id="Q8R149"/>
<dbReference type="Antibodypedia" id="52338">
    <property type="antibodies" value="97 antibodies from 21 providers"/>
</dbReference>
<dbReference type="DNASU" id="215051"/>
<dbReference type="Ensembl" id="ENSMUST00000074957.5">
    <molecule id="Q8R149-1"/>
    <property type="protein sequence ID" value="ENSMUSP00000074490.4"/>
    <property type="gene ID" value="ENSMUSG00000032077.6"/>
</dbReference>
<dbReference type="GeneID" id="215051"/>
<dbReference type="KEGG" id="mmu:215051"/>
<dbReference type="UCSC" id="uc009phi.1">
    <molecule id="Q8R149-1"/>
    <property type="organism name" value="mouse"/>
</dbReference>
<dbReference type="AGR" id="MGI:2443443"/>
<dbReference type="CTD" id="84811"/>
<dbReference type="MGI" id="MGI:2443443">
    <property type="gene designation" value="Bud13"/>
</dbReference>
<dbReference type="VEuPathDB" id="HostDB:ENSMUSG00000032077"/>
<dbReference type="eggNOG" id="KOG2654">
    <property type="taxonomic scope" value="Eukaryota"/>
</dbReference>
<dbReference type="GeneTree" id="ENSGT00390000014500"/>
<dbReference type="HOGENOM" id="CLU_024195_3_1_1"/>
<dbReference type="InParanoid" id="Q8R149"/>
<dbReference type="OMA" id="FEAEFQF"/>
<dbReference type="OrthoDB" id="6022at2759"/>
<dbReference type="PhylomeDB" id="Q8R149"/>
<dbReference type="TreeFam" id="TF315331"/>
<dbReference type="Reactome" id="R-MMU-72163">
    <property type="pathway name" value="mRNA Splicing - Major Pathway"/>
</dbReference>
<dbReference type="BioGRID-ORCS" id="215051">
    <property type="hits" value="6 hits in 76 CRISPR screens"/>
</dbReference>
<dbReference type="PRO" id="PR:Q8R149"/>
<dbReference type="Proteomes" id="UP000000589">
    <property type="component" value="Chromosome 9"/>
</dbReference>
<dbReference type="RNAct" id="Q8R149">
    <property type="molecule type" value="protein"/>
</dbReference>
<dbReference type="Bgee" id="ENSMUSG00000032077">
    <property type="expression patterns" value="Expressed in animal zygote and 209 other cell types or tissues"/>
</dbReference>
<dbReference type="ExpressionAtlas" id="Q8R149">
    <property type="expression patterns" value="baseline and differential"/>
</dbReference>
<dbReference type="GO" id="GO:0005654">
    <property type="term" value="C:nucleoplasm"/>
    <property type="evidence" value="ECO:0007669"/>
    <property type="project" value="Ensembl"/>
</dbReference>
<dbReference type="GO" id="GO:0005634">
    <property type="term" value="C:nucleus"/>
    <property type="evidence" value="ECO:0000250"/>
    <property type="project" value="UniProtKB"/>
</dbReference>
<dbReference type="GO" id="GO:0071005">
    <property type="term" value="C:U2-type precatalytic spliceosome"/>
    <property type="evidence" value="ECO:0000250"/>
    <property type="project" value="UniProtKB"/>
</dbReference>
<dbReference type="GO" id="GO:0000398">
    <property type="term" value="P:mRNA splicing, via spliceosome"/>
    <property type="evidence" value="ECO:0000250"/>
    <property type="project" value="UniProtKB"/>
</dbReference>
<dbReference type="InterPro" id="IPR018609">
    <property type="entry name" value="Bud13"/>
</dbReference>
<dbReference type="InterPro" id="IPR051112">
    <property type="entry name" value="CWC26_splicing_factor"/>
</dbReference>
<dbReference type="PANTHER" id="PTHR31809">
    <property type="entry name" value="BUD13 HOMOLOG"/>
    <property type="match status" value="1"/>
</dbReference>
<dbReference type="PANTHER" id="PTHR31809:SF0">
    <property type="entry name" value="BUD13 HOMOLOG"/>
    <property type="match status" value="1"/>
</dbReference>
<dbReference type="Pfam" id="PF09736">
    <property type="entry name" value="Bud13"/>
    <property type="match status" value="1"/>
</dbReference>
<feature type="chain" id="PRO_0000287689" description="BUD13 homolog">
    <location>
        <begin position="1"/>
        <end position="637"/>
    </location>
</feature>
<feature type="region of interest" description="Disordered" evidence="4">
    <location>
        <begin position="18"/>
        <end position="53"/>
    </location>
</feature>
<feature type="region of interest" description="Disordered" evidence="4">
    <location>
        <begin position="104"/>
        <end position="470"/>
    </location>
</feature>
<feature type="region of interest" description="Disordered" evidence="4">
    <location>
        <begin position="553"/>
        <end position="595"/>
    </location>
</feature>
<feature type="coiled-coil region" evidence="3">
    <location>
        <begin position="490"/>
        <end position="538"/>
    </location>
</feature>
<feature type="compositionally biased region" description="Basic and acidic residues" evidence="4">
    <location>
        <begin position="108"/>
        <end position="119"/>
    </location>
</feature>
<feature type="compositionally biased region" description="Polar residues" evidence="4">
    <location>
        <begin position="260"/>
        <end position="275"/>
    </location>
</feature>
<feature type="compositionally biased region" description="Basic and acidic residues" evidence="4">
    <location>
        <begin position="295"/>
        <end position="315"/>
    </location>
</feature>
<feature type="compositionally biased region" description="Polar residues" evidence="4">
    <location>
        <begin position="318"/>
        <end position="335"/>
    </location>
</feature>
<feature type="compositionally biased region" description="Basic and acidic residues" evidence="4">
    <location>
        <begin position="353"/>
        <end position="362"/>
    </location>
</feature>
<feature type="compositionally biased region" description="Basic residues" evidence="4">
    <location>
        <begin position="430"/>
        <end position="439"/>
    </location>
</feature>
<feature type="compositionally biased region" description="Basic and acidic residues" evidence="4">
    <location>
        <begin position="453"/>
        <end position="465"/>
    </location>
</feature>
<feature type="modified residue" description="Phosphothreonine" evidence="8">
    <location>
        <position position="131"/>
    </location>
</feature>
<feature type="modified residue" description="Phosphoserine" evidence="1">
    <location>
        <position position="135"/>
    </location>
</feature>
<feature type="modified residue" description="Phosphothreonine" evidence="7">
    <location>
        <position position="144"/>
    </location>
</feature>
<feature type="modified residue" description="Phosphoserine" evidence="8">
    <location>
        <position position="148"/>
    </location>
</feature>
<feature type="modified residue" description="Phosphothreonine" evidence="2">
    <location>
        <position position="157"/>
    </location>
</feature>
<feature type="modified residue" description="Phosphoserine" evidence="2">
    <location>
        <position position="161"/>
    </location>
</feature>
<feature type="modified residue" description="Phosphothreonine" evidence="7">
    <location>
        <position position="170"/>
    </location>
</feature>
<feature type="modified residue" description="Phosphoserine" evidence="8">
    <location>
        <position position="174"/>
    </location>
</feature>
<feature type="modified residue" description="Phosphothreonine" evidence="7">
    <location>
        <position position="183"/>
    </location>
</feature>
<feature type="modified residue" description="Phosphoserine" evidence="8">
    <location>
        <position position="187"/>
    </location>
</feature>
<feature type="modified residue" description="Phosphothreonine" evidence="7 8">
    <location>
        <position position="196"/>
    </location>
</feature>
<feature type="modified residue" description="Phosphothreonine" evidence="7 8">
    <location>
        <position position="209"/>
    </location>
</feature>
<feature type="modified residue" description="Phosphoserine" evidence="2">
    <location>
        <position position="213"/>
    </location>
</feature>
<feature type="modified residue" description="Phosphothreonine" evidence="7">
    <location>
        <position position="222"/>
    </location>
</feature>
<feature type="modified residue" description="Phosphoserine" evidence="8">
    <location>
        <position position="226"/>
    </location>
</feature>
<feature type="modified residue" description="Phosphoserine" evidence="2">
    <location>
        <position position="238"/>
    </location>
</feature>
<feature type="modified residue" description="Phosphoserine" evidence="2">
    <location>
        <position position="259"/>
    </location>
</feature>
<feature type="modified residue" description="Phosphoserine" evidence="2">
    <location>
        <position position="264"/>
    </location>
</feature>
<feature type="modified residue" description="Phosphoserine" evidence="2">
    <location>
        <position position="272"/>
    </location>
</feature>
<feature type="modified residue" description="Phosphoserine" evidence="2">
    <location>
        <position position="284"/>
    </location>
</feature>
<feature type="modified residue" description="Phosphoserine" evidence="2">
    <location>
        <position position="285"/>
    </location>
</feature>
<feature type="modified residue" description="Phosphoserine" evidence="8">
    <location>
        <position position="297"/>
    </location>
</feature>
<feature type="modified residue" description="Phosphoserine" evidence="8">
    <location>
        <position position="341"/>
    </location>
</feature>
<feature type="modified residue" description="Phosphoserine" evidence="8">
    <location>
        <position position="344"/>
    </location>
</feature>
<feature type="modified residue" description="Phosphoserine" evidence="8">
    <location>
        <position position="371"/>
    </location>
</feature>
<feature type="modified residue" description="Phosphoserine" evidence="2">
    <location>
        <position position="373"/>
    </location>
</feature>
<feature type="modified residue" description="Phosphoserine" evidence="8">
    <location>
        <position position="376"/>
    </location>
</feature>
<feature type="modified residue" description="Phosphoserine" evidence="2">
    <location>
        <position position="410"/>
    </location>
</feature>
<feature type="modified residue" description="Phosphoserine" evidence="2">
    <location>
        <position position="426"/>
    </location>
</feature>
<feature type="modified residue" description="Phosphotyrosine" evidence="2">
    <location>
        <position position="512"/>
    </location>
</feature>
<feature type="modified residue" description="Phosphoserine" evidence="2">
    <location>
        <position position="585"/>
    </location>
</feature>
<feature type="cross-link" description="Glycyl lysine isopeptide (Lys-Gly) (interchain with G-Cter in SUMO2)" evidence="2">
    <location>
        <position position="65"/>
    </location>
</feature>
<feature type="splice variant" id="VSP_025591" description="In isoform 2." evidence="5">
    <location>
        <begin position="608"/>
        <end position="637"/>
    </location>
</feature>
<feature type="sequence conflict" description="In Ref. 1; BAC34509." evidence="6" ref="1">
    <original>S</original>
    <variation>Y</variation>
    <location>
        <position position="174"/>
    </location>
</feature>
<feature type="sequence conflict" description="In Ref. 1; BAC34509." evidence="6" ref="1">
    <original>P</original>
    <variation>H</variation>
    <location>
        <position position="189"/>
    </location>
</feature>
<proteinExistence type="evidence at protein level"/>
<name>BUD13_MOUSE</name>